<sequence length="240" mass="25834">MTRHQKRLAVPNSWPVERKTNTFTVKAGAGPHGEAGVPLVVLLRDVLGYVDSTKEARYALNNDSVLVNGDAISDEQRPIGMFDILAFPERGEFFRVFPDEGGRLALTSVDEEAAGSRLGKITNKSVVPGGDAQLTLHDGTNVLVDADTEYDTKDSIVVDNESKDVVAHFEYEEGALVTAVAGQHAGRIGEVADIDVTLGSGSNTVFVGDDEDGYETVEEYLVVIDENFTGDDADEVDSDE</sequence>
<name>RS4E_HALLT</name>
<reference key="1">
    <citation type="journal article" date="2016" name="Stand. Genomic Sci.">
        <title>Complete genome sequence of the Antarctic Halorubrum lacusprofundi type strain ACAM 34.</title>
        <authorList>
            <person name="Anderson I.J."/>
            <person name="DasSarma P."/>
            <person name="Lucas S."/>
            <person name="Copeland A."/>
            <person name="Lapidus A."/>
            <person name="Del Rio T.G."/>
            <person name="Tice H."/>
            <person name="Dalin E."/>
            <person name="Bruce D.C."/>
            <person name="Goodwin L."/>
            <person name="Pitluck S."/>
            <person name="Sims D."/>
            <person name="Brettin T.S."/>
            <person name="Detter J.C."/>
            <person name="Han C.S."/>
            <person name="Larimer F."/>
            <person name="Hauser L."/>
            <person name="Land M."/>
            <person name="Ivanova N."/>
            <person name="Richardson P."/>
            <person name="Cavicchioli R."/>
            <person name="DasSarma S."/>
            <person name="Woese C.R."/>
            <person name="Kyrpides N.C."/>
        </authorList>
    </citation>
    <scope>NUCLEOTIDE SEQUENCE [LARGE SCALE GENOMIC DNA]</scope>
    <source>
        <strain>ATCC 49239 / DSM 5036 / JCM 8891 / ACAM 34</strain>
    </source>
</reference>
<feature type="chain" id="PRO_1000194357" description="Small ribosomal subunit protein eS4">
    <location>
        <begin position="1"/>
        <end position="240"/>
    </location>
</feature>
<feature type="domain" description="S4 RNA-binding" evidence="1">
    <location>
        <begin position="37"/>
        <end position="99"/>
    </location>
</feature>
<keyword id="KW-1185">Reference proteome</keyword>
<keyword id="KW-0687">Ribonucleoprotein</keyword>
<keyword id="KW-0689">Ribosomal protein</keyword>
<keyword id="KW-0694">RNA-binding</keyword>
<keyword id="KW-0699">rRNA-binding</keyword>
<proteinExistence type="inferred from homology"/>
<evidence type="ECO:0000255" key="1">
    <source>
        <dbReference type="HAMAP-Rule" id="MF_00485"/>
    </source>
</evidence>
<evidence type="ECO:0000305" key="2"/>
<organism>
    <name type="scientific">Halorubrum lacusprofundi (strain ATCC 49239 / DSM 5036 / JCM 8891 / ACAM 34)</name>
    <dbReference type="NCBI Taxonomy" id="416348"/>
    <lineage>
        <taxon>Archaea</taxon>
        <taxon>Methanobacteriati</taxon>
        <taxon>Methanobacteriota</taxon>
        <taxon>Stenosarchaea group</taxon>
        <taxon>Halobacteria</taxon>
        <taxon>Halobacteriales</taxon>
        <taxon>Haloferacaceae</taxon>
        <taxon>Halorubrum</taxon>
    </lineage>
</organism>
<accession>B9LSR5</accession>
<gene>
    <name evidence="1" type="primary">rps4e</name>
    <name type="ordered locus">Hlac_2437</name>
</gene>
<comment type="similarity">
    <text evidence="1">Belongs to the eukaryotic ribosomal protein eS4 family.</text>
</comment>
<dbReference type="EMBL" id="CP001365">
    <property type="protein sequence ID" value="ACM58012.1"/>
    <property type="molecule type" value="Genomic_DNA"/>
</dbReference>
<dbReference type="RefSeq" id="WP_015911126.1">
    <property type="nucleotide sequence ID" value="NC_012029.1"/>
</dbReference>
<dbReference type="SMR" id="B9LSR5"/>
<dbReference type="GeneID" id="7400555"/>
<dbReference type="KEGG" id="hla:Hlac_2437"/>
<dbReference type="eggNOG" id="arCOG04093">
    <property type="taxonomic scope" value="Archaea"/>
</dbReference>
<dbReference type="HOGENOM" id="CLU_060400_0_0_2"/>
<dbReference type="Proteomes" id="UP000000740">
    <property type="component" value="Chromosome 1"/>
</dbReference>
<dbReference type="GO" id="GO:0022627">
    <property type="term" value="C:cytosolic small ribosomal subunit"/>
    <property type="evidence" value="ECO:0007669"/>
    <property type="project" value="TreeGrafter"/>
</dbReference>
<dbReference type="GO" id="GO:0019843">
    <property type="term" value="F:rRNA binding"/>
    <property type="evidence" value="ECO:0007669"/>
    <property type="project" value="UniProtKB-KW"/>
</dbReference>
<dbReference type="GO" id="GO:0003735">
    <property type="term" value="F:structural constituent of ribosome"/>
    <property type="evidence" value="ECO:0007669"/>
    <property type="project" value="InterPro"/>
</dbReference>
<dbReference type="GO" id="GO:0006412">
    <property type="term" value="P:translation"/>
    <property type="evidence" value="ECO:0007669"/>
    <property type="project" value="UniProtKB-UniRule"/>
</dbReference>
<dbReference type="Gene3D" id="2.30.30.30">
    <property type="match status" value="1"/>
</dbReference>
<dbReference type="Gene3D" id="2.40.50.740">
    <property type="match status" value="1"/>
</dbReference>
<dbReference type="Gene3D" id="3.10.290.10">
    <property type="entry name" value="RNA-binding S4 domain"/>
    <property type="match status" value="1"/>
</dbReference>
<dbReference type="HAMAP" id="MF_00485">
    <property type="entry name" value="Ribosomal_eS4"/>
    <property type="match status" value="1"/>
</dbReference>
<dbReference type="InterPro" id="IPR014722">
    <property type="entry name" value="Rib_uL2_dom2"/>
</dbReference>
<dbReference type="InterPro" id="IPR000876">
    <property type="entry name" value="Ribosomal_eS4"/>
</dbReference>
<dbReference type="InterPro" id="IPR013845">
    <property type="entry name" value="Ribosomal_eS4_central_region"/>
</dbReference>
<dbReference type="InterPro" id="IPR038237">
    <property type="entry name" value="Ribosomal_eS4_central_sf"/>
</dbReference>
<dbReference type="InterPro" id="IPR013843">
    <property type="entry name" value="Ribosomal_eS4_N"/>
</dbReference>
<dbReference type="InterPro" id="IPR018199">
    <property type="entry name" value="Ribosomal_eS4_N_CS"/>
</dbReference>
<dbReference type="InterPro" id="IPR036986">
    <property type="entry name" value="S4_RNA-bd_sf"/>
</dbReference>
<dbReference type="NCBIfam" id="NF003312">
    <property type="entry name" value="PRK04313.1"/>
    <property type="match status" value="1"/>
</dbReference>
<dbReference type="PANTHER" id="PTHR11581">
    <property type="entry name" value="30S/40S RIBOSOMAL PROTEIN S4"/>
    <property type="match status" value="1"/>
</dbReference>
<dbReference type="PANTHER" id="PTHR11581:SF0">
    <property type="entry name" value="SMALL RIBOSOMAL SUBUNIT PROTEIN ES4"/>
    <property type="match status" value="1"/>
</dbReference>
<dbReference type="Pfam" id="PF00900">
    <property type="entry name" value="Ribosomal_S4e"/>
    <property type="match status" value="1"/>
</dbReference>
<dbReference type="Pfam" id="PF08071">
    <property type="entry name" value="RS4NT"/>
    <property type="match status" value="1"/>
</dbReference>
<dbReference type="PIRSF" id="PIRSF002116">
    <property type="entry name" value="Ribosomal_S4"/>
    <property type="match status" value="1"/>
</dbReference>
<dbReference type="SUPFAM" id="SSF55174">
    <property type="entry name" value="Alpha-L RNA-binding motif"/>
    <property type="match status" value="1"/>
</dbReference>
<dbReference type="PROSITE" id="PS00528">
    <property type="entry name" value="RIBOSOMAL_S4E"/>
    <property type="match status" value="1"/>
</dbReference>
<dbReference type="PROSITE" id="PS50889">
    <property type="entry name" value="S4"/>
    <property type="match status" value="1"/>
</dbReference>
<protein>
    <recommendedName>
        <fullName evidence="1">Small ribosomal subunit protein eS4</fullName>
    </recommendedName>
    <alternativeName>
        <fullName evidence="2">30S ribosomal protein S4e</fullName>
    </alternativeName>
</protein>